<accession>Q6G730</accession>
<comment type="function">
    <text evidence="1">Required for maturation of urease via the functional incorporation of the urease nickel metallocenter.</text>
</comment>
<comment type="subunit">
    <text evidence="1">UreD, UreF and UreG form a complex that acts as a GTP-hydrolysis-dependent molecular chaperone, activating the urease apoprotein by helping to assemble the nickel containing metallocenter of UreC. The UreE protein probably delivers the nickel.</text>
</comment>
<comment type="subcellular location">
    <subcellularLocation>
        <location evidence="1">Cytoplasm</location>
    </subcellularLocation>
</comment>
<comment type="similarity">
    <text evidence="1">Belongs to the UreF family.</text>
</comment>
<sequence length="229" mass="26480">MIDHTHLRLFQFCDSQFPTGAFSHSFGLETYIQRNIIHDDHTFIAWLKMFLQEQLTYSDGLAMRLVYDALENDDTQKVLHIDKLMFVQNLPKETRVGAKQMGTRMVKLALELYNSPWIAWYHQQMQDKKAKLNPAICFTMLGHHLGVDIETIIDYYLYQNVSSLTQNAVRAIPLGQTAGQKIVTHMIPYIEGTRKQIFELKEADFGMTAPGLELNQMAHENVNVRIFIS</sequence>
<reference key="1">
    <citation type="journal article" date="2004" name="Proc. Natl. Acad. Sci. U.S.A.">
        <title>Complete genomes of two clinical Staphylococcus aureus strains: evidence for the rapid evolution of virulence and drug resistance.</title>
        <authorList>
            <person name="Holden M.T.G."/>
            <person name="Feil E.J."/>
            <person name="Lindsay J.A."/>
            <person name="Peacock S.J."/>
            <person name="Day N.P.J."/>
            <person name="Enright M.C."/>
            <person name="Foster T.J."/>
            <person name="Moore C.E."/>
            <person name="Hurst L."/>
            <person name="Atkin R."/>
            <person name="Barron A."/>
            <person name="Bason N."/>
            <person name="Bentley S.D."/>
            <person name="Chillingworth C."/>
            <person name="Chillingworth T."/>
            <person name="Churcher C."/>
            <person name="Clark L."/>
            <person name="Corton C."/>
            <person name="Cronin A."/>
            <person name="Doggett J."/>
            <person name="Dowd L."/>
            <person name="Feltwell T."/>
            <person name="Hance Z."/>
            <person name="Harris B."/>
            <person name="Hauser H."/>
            <person name="Holroyd S."/>
            <person name="Jagels K."/>
            <person name="James K.D."/>
            <person name="Lennard N."/>
            <person name="Line A."/>
            <person name="Mayes R."/>
            <person name="Moule S."/>
            <person name="Mungall K."/>
            <person name="Ormond D."/>
            <person name="Quail M.A."/>
            <person name="Rabbinowitsch E."/>
            <person name="Rutherford K.M."/>
            <person name="Sanders M."/>
            <person name="Sharp S."/>
            <person name="Simmonds M."/>
            <person name="Stevens K."/>
            <person name="Whitehead S."/>
            <person name="Barrell B.G."/>
            <person name="Spratt B.G."/>
            <person name="Parkhill J."/>
        </authorList>
    </citation>
    <scope>NUCLEOTIDE SEQUENCE [LARGE SCALE GENOMIC DNA]</scope>
    <source>
        <strain>MSSA476</strain>
    </source>
</reference>
<name>UREF_STAAS</name>
<feature type="chain" id="PRO_0000344184" description="Urease accessory protein UreF">
    <location>
        <begin position="1"/>
        <end position="229"/>
    </location>
</feature>
<evidence type="ECO:0000255" key="1">
    <source>
        <dbReference type="HAMAP-Rule" id="MF_01385"/>
    </source>
</evidence>
<organism>
    <name type="scientific">Staphylococcus aureus (strain MSSA476)</name>
    <dbReference type="NCBI Taxonomy" id="282459"/>
    <lineage>
        <taxon>Bacteria</taxon>
        <taxon>Bacillati</taxon>
        <taxon>Bacillota</taxon>
        <taxon>Bacilli</taxon>
        <taxon>Bacillales</taxon>
        <taxon>Staphylococcaceae</taxon>
        <taxon>Staphylococcus</taxon>
    </lineage>
</organism>
<gene>
    <name evidence="1" type="primary">ureF</name>
    <name type="ordered locus">SAS2182</name>
</gene>
<protein>
    <recommendedName>
        <fullName evidence="1">Urease accessory protein UreF</fullName>
    </recommendedName>
</protein>
<dbReference type="EMBL" id="BX571857">
    <property type="protein sequence ID" value="CAG43993.1"/>
    <property type="molecule type" value="Genomic_DNA"/>
</dbReference>
<dbReference type="RefSeq" id="WP_000565255.1">
    <property type="nucleotide sequence ID" value="NC_002953.3"/>
</dbReference>
<dbReference type="SMR" id="Q6G730"/>
<dbReference type="KEGG" id="sas:SAS2182"/>
<dbReference type="HOGENOM" id="CLU_049215_4_2_9"/>
<dbReference type="GO" id="GO:0005737">
    <property type="term" value="C:cytoplasm"/>
    <property type="evidence" value="ECO:0007669"/>
    <property type="project" value="UniProtKB-SubCell"/>
</dbReference>
<dbReference type="GO" id="GO:0016151">
    <property type="term" value="F:nickel cation binding"/>
    <property type="evidence" value="ECO:0007669"/>
    <property type="project" value="UniProtKB-UniRule"/>
</dbReference>
<dbReference type="Gene3D" id="1.10.4190.10">
    <property type="entry name" value="Urease accessory protein UreF"/>
    <property type="match status" value="1"/>
</dbReference>
<dbReference type="HAMAP" id="MF_01385">
    <property type="entry name" value="UreF"/>
    <property type="match status" value="1"/>
</dbReference>
<dbReference type="InterPro" id="IPR002639">
    <property type="entry name" value="UreF"/>
</dbReference>
<dbReference type="InterPro" id="IPR038277">
    <property type="entry name" value="UreF_sf"/>
</dbReference>
<dbReference type="PANTHER" id="PTHR33620">
    <property type="entry name" value="UREASE ACCESSORY PROTEIN F"/>
    <property type="match status" value="1"/>
</dbReference>
<dbReference type="PANTHER" id="PTHR33620:SF1">
    <property type="entry name" value="UREASE ACCESSORY PROTEIN F"/>
    <property type="match status" value="1"/>
</dbReference>
<dbReference type="Pfam" id="PF01730">
    <property type="entry name" value="UreF"/>
    <property type="match status" value="1"/>
</dbReference>
<dbReference type="PIRSF" id="PIRSF009467">
    <property type="entry name" value="Ureas_acces_UreF"/>
    <property type="match status" value="1"/>
</dbReference>
<keyword id="KW-0143">Chaperone</keyword>
<keyword id="KW-0963">Cytoplasm</keyword>
<keyword id="KW-0996">Nickel insertion</keyword>
<proteinExistence type="inferred from homology"/>